<reference key="1">
    <citation type="submission" date="2008-02" db="EMBL/GenBank/DDBJ databases">
        <title>Complete sequence of Pseudomonas putida W619.</title>
        <authorList>
            <person name="Copeland A."/>
            <person name="Lucas S."/>
            <person name="Lapidus A."/>
            <person name="Barry K."/>
            <person name="Detter J.C."/>
            <person name="Glavina del Rio T."/>
            <person name="Dalin E."/>
            <person name="Tice H."/>
            <person name="Pitluck S."/>
            <person name="Chain P."/>
            <person name="Malfatti S."/>
            <person name="Shin M."/>
            <person name="Vergez L."/>
            <person name="Schmutz J."/>
            <person name="Larimer F."/>
            <person name="Land M."/>
            <person name="Hauser L."/>
            <person name="Kyrpides N."/>
            <person name="Kim E."/>
            <person name="Taghavi S."/>
            <person name="Vangronsveld D."/>
            <person name="van der Lelie D."/>
            <person name="Richardson P."/>
        </authorList>
    </citation>
    <scope>NUCLEOTIDE SEQUENCE [LARGE SCALE GENOMIC DNA]</scope>
    <source>
        <strain>W619</strain>
    </source>
</reference>
<dbReference type="EC" id="2.7.7.66" evidence="1"/>
<dbReference type="EMBL" id="CP000949">
    <property type="protein sequence ID" value="ACA73370.1"/>
    <property type="molecule type" value="Genomic_DNA"/>
</dbReference>
<dbReference type="STRING" id="390235.PputW619_2878"/>
<dbReference type="KEGG" id="ppw:PputW619_2878"/>
<dbReference type="eggNOG" id="ENOG502Z8NU">
    <property type="taxonomic scope" value="Bacteria"/>
</dbReference>
<dbReference type="HOGENOM" id="CLU_111981_0_0_6"/>
<dbReference type="OrthoDB" id="1275217at2"/>
<dbReference type="GO" id="GO:0016779">
    <property type="term" value="F:nucleotidyltransferase activity"/>
    <property type="evidence" value="ECO:0007669"/>
    <property type="project" value="UniProtKB-UniRule"/>
</dbReference>
<dbReference type="HAMAP" id="MF_00650">
    <property type="entry name" value="Malonate_MdcG"/>
    <property type="match status" value="1"/>
</dbReference>
<dbReference type="InterPro" id="IPR017557">
    <property type="entry name" value="Holo-ACP_synthase"/>
</dbReference>
<dbReference type="InterPro" id="IPR049180">
    <property type="entry name" value="MdcG_C"/>
</dbReference>
<dbReference type="InterPro" id="IPR048903">
    <property type="entry name" value="MdcG_N"/>
</dbReference>
<dbReference type="NCBIfam" id="TIGR03135">
    <property type="entry name" value="malonate_mdcG"/>
    <property type="match status" value="1"/>
</dbReference>
<dbReference type="NCBIfam" id="NF002332">
    <property type="entry name" value="PRK01293.1"/>
    <property type="match status" value="1"/>
</dbReference>
<dbReference type="Pfam" id="PF10620">
    <property type="entry name" value="MdcG"/>
    <property type="match status" value="1"/>
</dbReference>
<dbReference type="Pfam" id="PF20866">
    <property type="entry name" value="MdcG_N"/>
    <property type="match status" value="1"/>
</dbReference>
<keyword id="KW-0548">Nucleotidyltransferase</keyword>
<keyword id="KW-0808">Transferase</keyword>
<evidence type="ECO:0000255" key="1">
    <source>
        <dbReference type="HAMAP-Rule" id="MF_00650"/>
    </source>
</evidence>
<accession>B1J9E4</accession>
<proteinExistence type="inferred from homology"/>
<name>MDCG_PSEPW</name>
<comment type="function">
    <text evidence="1">Transfers 2'-(5-triphosphoribosyl)-3'-dephosphocoenzyme-A to the apo-[acyl-carrier-protein] of the malonate decarboxylase to yield holo-[acyl-carrier-protein].</text>
</comment>
<comment type="catalytic activity">
    <reaction evidence="1">
        <text>apo-[malonate decarboxylase ACP] + 2'-(5''-triphospho-alpha-D-ribosyl)-3'-dephospho-CoA = holo-[malonate decarboxylase ACP] + diphosphate</text>
        <dbReference type="Rhea" id="RHEA:42644"/>
        <dbReference type="Rhea" id="RHEA-COMP:10160"/>
        <dbReference type="Rhea" id="RHEA-COMP:10161"/>
        <dbReference type="ChEBI" id="CHEBI:29999"/>
        <dbReference type="ChEBI" id="CHEBI:33019"/>
        <dbReference type="ChEBI" id="CHEBI:61378"/>
        <dbReference type="ChEBI" id="CHEBI:82683"/>
        <dbReference type="EC" id="2.7.7.66"/>
    </reaction>
</comment>
<comment type="similarity">
    <text evidence="1">Belongs to the MdcG family.</text>
</comment>
<sequence>MSAPQPHDLLWGMTPAALPVDAPAWATQVLAAGQPVVVRRACCAAGWVAVGLRGEGRAQRLGVQMRLADIRRQLRPEALRGQGTSPWAALQALASVAPVLDACGLAWGPTGGVGYQLATGVEVLHAASDLDLLLRTPRPMSRAKARELLDSLDCSPCRIDVQLQTPAGGIALREWAGVAQRVLLKSALGARLVADPWNLLECAA</sequence>
<organism>
    <name type="scientific">Pseudomonas putida (strain W619)</name>
    <dbReference type="NCBI Taxonomy" id="390235"/>
    <lineage>
        <taxon>Bacteria</taxon>
        <taxon>Pseudomonadati</taxon>
        <taxon>Pseudomonadota</taxon>
        <taxon>Gammaproteobacteria</taxon>
        <taxon>Pseudomonadales</taxon>
        <taxon>Pseudomonadaceae</taxon>
        <taxon>Pseudomonas</taxon>
    </lineage>
</organism>
<feature type="chain" id="PRO_1000130987" description="Phosphoribosyl-dephospho-CoA transferase">
    <location>
        <begin position="1"/>
        <end position="204"/>
    </location>
</feature>
<feature type="active site" evidence="1">
    <location>
        <position position="129"/>
    </location>
</feature>
<feature type="active site" evidence="1">
    <location>
        <position position="131"/>
    </location>
</feature>
<protein>
    <recommendedName>
        <fullName evidence="1">Phosphoribosyl-dephospho-CoA transferase</fullName>
        <ecNumber evidence="1">2.7.7.66</ecNumber>
    </recommendedName>
    <alternativeName>
        <fullName evidence="1">Malonate decarboxylase holo-[acyl-carrier-protein] synthase</fullName>
        <shortName evidence="1">Holo-ACP synthase</shortName>
    </alternativeName>
</protein>
<gene>
    <name evidence="1" type="primary">mdcG</name>
    <name type="ordered locus">PputW619_2878</name>
</gene>